<protein>
    <recommendedName>
        <fullName evidence="1">Small ribosomal subunit protein uS19</fullName>
    </recommendedName>
    <alternativeName>
        <fullName evidence="2">30S ribosomal protein S19</fullName>
    </alternativeName>
</protein>
<proteinExistence type="inferred from homology"/>
<reference key="1">
    <citation type="submission" date="2007-11" db="EMBL/GenBank/DDBJ databases">
        <authorList>
            <consortium name="The Salmonella enterica serovar Paratyphi B Genome Sequencing Project"/>
            <person name="McClelland M."/>
            <person name="Sanderson E.K."/>
            <person name="Porwollik S."/>
            <person name="Spieth J."/>
            <person name="Clifton W.S."/>
            <person name="Fulton R."/>
            <person name="Cordes M."/>
            <person name="Wollam A."/>
            <person name="Shah N."/>
            <person name="Pepin K."/>
            <person name="Bhonagiri V."/>
            <person name="Nash W."/>
            <person name="Johnson M."/>
            <person name="Thiruvilangam P."/>
            <person name="Wilson R."/>
        </authorList>
    </citation>
    <scope>NUCLEOTIDE SEQUENCE [LARGE SCALE GENOMIC DNA]</scope>
    <source>
        <strain>ATCC BAA-1250 / SPB7</strain>
    </source>
</reference>
<feature type="chain" id="PRO_1000081791" description="Small ribosomal subunit protein uS19">
    <location>
        <begin position="1"/>
        <end position="92"/>
    </location>
</feature>
<comment type="function">
    <text evidence="1">Protein S19 forms a complex with S13 that binds strongly to the 16S ribosomal RNA.</text>
</comment>
<comment type="similarity">
    <text evidence="1">Belongs to the universal ribosomal protein uS19 family.</text>
</comment>
<evidence type="ECO:0000255" key="1">
    <source>
        <dbReference type="HAMAP-Rule" id="MF_00531"/>
    </source>
</evidence>
<evidence type="ECO:0000305" key="2"/>
<dbReference type="EMBL" id="CP000886">
    <property type="protein sequence ID" value="ABX69594.1"/>
    <property type="molecule type" value="Genomic_DNA"/>
</dbReference>
<dbReference type="RefSeq" id="WP_001138115.1">
    <property type="nucleotide sequence ID" value="NC_010102.1"/>
</dbReference>
<dbReference type="SMR" id="A9MSZ4"/>
<dbReference type="GeneID" id="97603665"/>
<dbReference type="KEGG" id="spq:SPAB_04277"/>
<dbReference type="PATRIC" id="fig|1016998.12.peg.4023"/>
<dbReference type="HOGENOM" id="CLU_144911_0_1_6"/>
<dbReference type="BioCyc" id="SENT1016998:SPAB_RS17415-MONOMER"/>
<dbReference type="Proteomes" id="UP000008556">
    <property type="component" value="Chromosome"/>
</dbReference>
<dbReference type="GO" id="GO:0005737">
    <property type="term" value="C:cytoplasm"/>
    <property type="evidence" value="ECO:0007669"/>
    <property type="project" value="UniProtKB-ARBA"/>
</dbReference>
<dbReference type="GO" id="GO:0015935">
    <property type="term" value="C:small ribosomal subunit"/>
    <property type="evidence" value="ECO:0007669"/>
    <property type="project" value="InterPro"/>
</dbReference>
<dbReference type="GO" id="GO:0019843">
    <property type="term" value="F:rRNA binding"/>
    <property type="evidence" value="ECO:0007669"/>
    <property type="project" value="UniProtKB-UniRule"/>
</dbReference>
<dbReference type="GO" id="GO:0003735">
    <property type="term" value="F:structural constituent of ribosome"/>
    <property type="evidence" value="ECO:0007669"/>
    <property type="project" value="InterPro"/>
</dbReference>
<dbReference type="GO" id="GO:0000028">
    <property type="term" value="P:ribosomal small subunit assembly"/>
    <property type="evidence" value="ECO:0007669"/>
    <property type="project" value="TreeGrafter"/>
</dbReference>
<dbReference type="GO" id="GO:0006412">
    <property type="term" value="P:translation"/>
    <property type="evidence" value="ECO:0007669"/>
    <property type="project" value="UniProtKB-UniRule"/>
</dbReference>
<dbReference type="FunFam" id="3.30.860.10:FF:000001">
    <property type="entry name" value="30S ribosomal protein S19"/>
    <property type="match status" value="1"/>
</dbReference>
<dbReference type="Gene3D" id="3.30.860.10">
    <property type="entry name" value="30s Ribosomal Protein S19, Chain A"/>
    <property type="match status" value="1"/>
</dbReference>
<dbReference type="HAMAP" id="MF_00531">
    <property type="entry name" value="Ribosomal_uS19"/>
    <property type="match status" value="1"/>
</dbReference>
<dbReference type="InterPro" id="IPR002222">
    <property type="entry name" value="Ribosomal_uS19"/>
</dbReference>
<dbReference type="InterPro" id="IPR005732">
    <property type="entry name" value="Ribosomal_uS19_bac-type"/>
</dbReference>
<dbReference type="InterPro" id="IPR020934">
    <property type="entry name" value="Ribosomal_uS19_CS"/>
</dbReference>
<dbReference type="InterPro" id="IPR023575">
    <property type="entry name" value="Ribosomal_uS19_SF"/>
</dbReference>
<dbReference type="NCBIfam" id="TIGR01050">
    <property type="entry name" value="rpsS_bact"/>
    <property type="match status" value="1"/>
</dbReference>
<dbReference type="PANTHER" id="PTHR11880">
    <property type="entry name" value="RIBOSOMAL PROTEIN S19P FAMILY MEMBER"/>
    <property type="match status" value="1"/>
</dbReference>
<dbReference type="PANTHER" id="PTHR11880:SF8">
    <property type="entry name" value="SMALL RIBOSOMAL SUBUNIT PROTEIN US19M"/>
    <property type="match status" value="1"/>
</dbReference>
<dbReference type="Pfam" id="PF00203">
    <property type="entry name" value="Ribosomal_S19"/>
    <property type="match status" value="1"/>
</dbReference>
<dbReference type="PIRSF" id="PIRSF002144">
    <property type="entry name" value="Ribosomal_S19"/>
    <property type="match status" value="1"/>
</dbReference>
<dbReference type="PRINTS" id="PR00975">
    <property type="entry name" value="RIBOSOMALS19"/>
</dbReference>
<dbReference type="SUPFAM" id="SSF54570">
    <property type="entry name" value="Ribosomal protein S19"/>
    <property type="match status" value="1"/>
</dbReference>
<dbReference type="PROSITE" id="PS00323">
    <property type="entry name" value="RIBOSOMAL_S19"/>
    <property type="match status" value="1"/>
</dbReference>
<gene>
    <name evidence="1" type="primary">rpsS</name>
    <name type="ordered locus">SPAB_04277</name>
</gene>
<sequence length="92" mass="10416">MPRSLKKGPFIDLHLLKKVEKAVESGDKKPLRTWSRRSTIFPNMIGLTIAVHNGRQHVPVFVSDEMVGHKLGEFAPTRTYRGHAADKKAKKK</sequence>
<organism>
    <name type="scientific">Salmonella paratyphi B (strain ATCC BAA-1250 / SPB7)</name>
    <dbReference type="NCBI Taxonomy" id="1016998"/>
    <lineage>
        <taxon>Bacteria</taxon>
        <taxon>Pseudomonadati</taxon>
        <taxon>Pseudomonadota</taxon>
        <taxon>Gammaproteobacteria</taxon>
        <taxon>Enterobacterales</taxon>
        <taxon>Enterobacteriaceae</taxon>
        <taxon>Salmonella</taxon>
    </lineage>
</organism>
<accession>A9MSZ4</accession>
<keyword id="KW-0687">Ribonucleoprotein</keyword>
<keyword id="KW-0689">Ribosomal protein</keyword>
<keyword id="KW-0694">RNA-binding</keyword>
<keyword id="KW-0699">rRNA-binding</keyword>
<name>RS19_SALPB</name>